<accession>Q8BV49</accession>
<accession>Q3KNA6</accession>
<accession>Q3KNA7</accession>
<accession>Q8BLY5</accession>
<accession>Q8BVS6</accession>
<name>IFIX_MOUSE</name>
<gene>
    <name evidence="6" type="primary">Pyhin1</name>
    <name type="synonym">Ifi209</name>
    <name type="synonym">Ifix</name>
</gene>
<keyword id="KW-0539">Nucleus</keyword>
<keyword id="KW-1185">Reference proteome</keyword>
<dbReference type="EMBL" id="AK040884">
    <property type="protein sequence ID" value="BAC30731.1"/>
    <property type="molecule type" value="mRNA"/>
</dbReference>
<dbReference type="EMBL" id="AK076726">
    <property type="protein sequence ID" value="BAC36457.1"/>
    <property type="molecule type" value="mRNA"/>
</dbReference>
<dbReference type="EMBL" id="AK080371">
    <property type="protein sequence ID" value="BAC37894.1"/>
    <property type="molecule type" value="mRNA"/>
</dbReference>
<dbReference type="EMBL" id="AK150817">
    <property type="protein sequence ID" value="BAE29880.1"/>
    <property type="molecule type" value="mRNA"/>
</dbReference>
<dbReference type="EMBL" id="BC096384">
    <property type="protein sequence ID" value="AAH96384.1"/>
    <property type="molecule type" value="mRNA"/>
</dbReference>
<dbReference type="EMBL" id="BC107378">
    <property type="protein sequence ID" value="AAI07379.1"/>
    <property type="molecule type" value="mRNA"/>
</dbReference>
<dbReference type="EMBL" id="BC107379">
    <property type="protein sequence ID" value="AAI07380.1"/>
    <property type="molecule type" value="mRNA"/>
</dbReference>
<dbReference type="CCDS" id="CCDS35791.1"/>
<dbReference type="RefSeq" id="NP_778191.1">
    <property type="nucleotide sequence ID" value="NM_175026.3"/>
</dbReference>
<dbReference type="SMR" id="Q8BV49"/>
<dbReference type="BioGRID" id="231754">
    <property type="interactions" value="1"/>
</dbReference>
<dbReference type="FunCoup" id="Q8BV49">
    <property type="interactions" value="37"/>
</dbReference>
<dbReference type="STRING" id="10090.ENSMUSP00000061900"/>
<dbReference type="GlyGen" id="Q8BV49">
    <property type="glycosylation" value="1 site, 1 N-linked glycan (1 site)"/>
</dbReference>
<dbReference type="iPTMnet" id="Q8BV49"/>
<dbReference type="PhosphoSitePlus" id="Q8BV49"/>
<dbReference type="jPOST" id="Q8BV49"/>
<dbReference type="PaxDb" id="10090-ENSMUSP00000061900"/>
<dbReference type="PeptideAtlas" id="Q8BV49"/>
<dbReference type="ProteomicsDB" id="266952"/>
<dbReference type="DNASU" id="236312"/>
<dbReference type="Ensembl" id="ENSMUST00000056071.13">
    <property type="protein sequence ID" value="ENSMUSP00000061900.8"/>
    <property type="gene ID" value="ENSMUSG00000043263.14"/>
</dbReference>
<dbReference type="GeneID" id="236312"/>
<dbReference type="KEGG" id="mmu:236312"/>
<dbReference type="UCSC" id="uc007drr.2">
    <property type="organism name" value="mouse"/>
</dbReference>
<dbReference type="AGR" id="MGI:2138243"/>
<dbReference type="CTD" id="236312"/>
<dbReference type="MGI" id="MGI:2138243">
    <property type="gene designation" value="Ifi209"/>
</dbReference>
<dbReference type="VEuPathDB" id="HostDB:ENSMUSG00000043263"/>
<dbReference type="eggNOG" id="ENOG502QTQS">
    <property type="taxonomic scope" value="Eukaryota"/>
</dbReference>
<dbReference type="GeneTree" id="ENSGT00390000013296"/>
<dbReference type="HOGENOM" id="CLU_020123_2_0_1"/>
<dbReference type="InParanoid" id="Q8BV49"/>
<dbReference type="OMA" id="NYICYEI"/>
<dbReference type="OrthoDB" id="9634829at2759"/>
<dbReference type="PhylomeDB" id="Q8BV49"/>
<dbReference type="TreeFam" id="TF337385"/>
<dbReference type="BioGRID-ORCS" id="236312">
    <property type="hits" value="3 hits in 77 CRISPR screens"/>
</dbReference>
<dbReference type="PRO" id="PR:Q8BV49"/>
<dbReference type="Proteomes" id="UP000000589">
    <property type="component" value="Chromosome 1"/>
</dbReference>
<dbReference type="RNAct" id="Q8BV49">
    <property type="molecule type" value="protein"/>
</dbReference>
<dbReference type="Bgee" id="ENSMUSG00000043263">
    <property type="expression patterns" value="Expressed in peripheral lymph node and 72 other cell types or tissues"/>
</dbReference>
<dbReference type="ExpressionAtlas" id="Q8BV49">
    <property type="expression patterns" value="baseline and differential"/>
</dbReference>
<dbReference type="GO" id="GO:0005634">
    <property type="term" value="C:nucleus"/>
    <property type="evidence" value="ECO:0007669"/>
    <property type="project" value="UniProtKB-SubCell"/>
</dbReference>
<dbReference type="GO" id="GO:0002218">
    <property type="term" value="P:activation of innate immune response"/>
    <property type="evidence" value="ECO:0007669"/>
    <property type="project" value="InterPro"/>
</dbReference>
<dbReference type="GO" id="GO:0035458">
    <property type="term" value="P:cellular response to interferon-beta"/>
    <property type="evidence" value="ECO:0000314"/>
    <property type="project" value="MGI"/>
</dbReference>
<dbReference type="CDD" id="cd08305">
    <property type="entry name" value="Pyrin"/>
    <property type="match status" value="1"/>
</dbReference>
<dbReference type="FunFam" id="2.40.50.140:FF:000500">
    <property type="entry name" value="Interferon-activable protein 202"/>
    <property type="match status" value="1"/>
</dbReference>
<dbReference type="FunFam" id="1.10.533.10:FF:000011">
    <property type="entry name" value="Myeloid cell nuclear differentiation antigen"/>
    <property type="match status" value="1"/>
</dbReference>
<dbReference type="FunFam" id="2.40.50.140:FF:000101">
    <property type="entry name" value="Myeloid cell nuclear differentiation antigen"/>
    <property type="match status" value="1"/>
</dbReference>
<dbReference type="Gene3D" id="1.10.533.10">
    <property type="entry name" value="Death Domain, Fas"/>
    <property type="match status" value="1"/>
</dbReference>
<dbReference type="Gene3D" id="2.40.50.140">
    <property type="entry name" value="Nucleic acid-binding proteins"/>
    <property type="match status" value="2"/>
</dbReference>
<dbReference type="InterPro" id="IPR004020">
    <property type="entry name" value="DAPIN"/>
</dbReference>
<dbReference type="InterPro" id="IPR011029">
    <property type="entry name" value="DEATH-like_dom_sf"/>
</dbReference>
<dbReference type="InterPro" id="IPR040205">
    <property type="entry name" value="HIN-200"/>
</dbReference>
<dbReference type="InterPro" id="IPR004021">
    <property type="entry name" value="HIN200/IF120x"/>
</dbReference>
<dbReference type="InterPro" id="IPR012340">
    <property type="entry name" value="NA-bd_OB-fold"/>
</dbReference>
<dbReference type="PANTHER" id="PTHR12200:SF28">
    <property type="entry name" value="INTEFERON-ACTIVABLE PROTEIN 208-RELATED"/>
    <property type="match status" value="1"/>
</dbReference>
<dbReference type="PANTHER" id="PTHR12200">
    <property type="entry name" value="INTERFERON-INDUCIBLE PROTEIN AIM2 FAMILY MEMBER"/>
    <property type="match status" value="1"/>
</dbReference>
<dbReference type="Pfam" id="PF02760">
    <property type="entry name" value="HIN"/>
    <property type="match status" value="1"/>
</dbReference>
<dbReference type="Pfam" id="PF02758">
    <property type="entry name" value="PYRIN"/>
    <property type="match status" value="1"/>
</dbReference>
<dbReference type="SMART" id="SM01289">
    <property type="entry name" value="PYRIN"/>
    <property type="match status" value="1"/>
</dbReference>
<dbReference type="SUPFAM" id="SSF159141">
    <property type="entry name" value="HIN-2000 domain-like"/>
    <property type="match status" value="2"/>
</dbReference>
<dbReference type="PROSITE" id="PS50824">
    <property type="entry name" value="DAPIN"/>
    <property type="match status" value="1"/>
</dbReference>
<dbReference type="PROSITE" id="PS50834">
    <property type="entry name" value="HIN_200"/>
    <property type="match status" value="1"/>
</dbReference>
<organism>
    <name type="scientific">Mus musculus</name>
    <name type="common">Mouse</name>
    <dbReference type="NCBI Taxonomy" id="10090"/>
    <lineage>
        <taxon>Eukaryota</taxon>
        <taxon>Metazoa</taxon>
        <taxon>Chordata</taxon>
        <taxon>Craniata</taxon>
        <taxon>Vertebrata</taxon>
        <taxon>Euteleostomi</taxon>
        <taxon>Mammalia</taxon>
        <taxon>Eutheria</taxon>
        <taxon>Euarchontoglires</taxon>
        <taxon>Glires</taxon>
        <taxon>Rodentia</taxon>
        <taxon>Myomorpha</taxon>
        <taxon>Muroidea</taxon>
        <taxon>Muridae</taxon>
        <taxon>Murinae</taxon>
        <taxon>Mus</taxon>
        <taxon>Mus</taxon>
    </lineage>
</organism>
<feature type="chain" id="PRO_0000334525" description="Pyrin and HIN domain-containing protein 1">
    <location>
        <begin position="1"/>
        <end position="420"/>
    </location>
</feature>
<feature type="domain" description="Pyrin" evidence="2">
    <location>
        <begin position="1"/>
        <end position="87"/>
    </location>
</feature>
<feature type="domain" description="HIN-200" evidence="3">
    <location>
        <begin position="219"/>
        <end position="416"/>
    </location>
</feature>
<feature type="region of interest" description="Disordered" evidence="4">
    <location>
        <begin position="82"/>
        <end position="201"/>
    </location>
</feature>
<feature type="region of interest" description="Disordered" evidence="4">
    <location>
        <begin position="216"/>
        <end position="236"/>
    </location>
</feature>
<feature type="compositionally biased region" description="Basic residues" evidence="4">
    <location>
        <begin position="87"/>
        <end position="102"/>
    </location>
</feature>
<feature type="compositionally biased region" description="Polar residues" evidence="4">
    <location>
        <begin position="108"/>
        <end position="118"/>
    </location>
</feature>
<feature type="compositionally biased region" description="Polar residues" evidence="4">
    <location>
        <begin position="126"/>
        <end position="151"/>
    </location>
</feature>
<feature type="compositionally biased region" description="Low complexity" evidence="4">
    <location>
        <begin position="152"/>
        <end position="169"/>
    </location>
</feature>
<feature type="compositionally biased region" description="Polar residues" evidence="4">
    <location>
        <begin position="170"/>
        <end position="201"/>
    </location>
</feature>
<feature type="compositionally biased region" description="Basic and acidic residues" evidence="4">
    <location>
        <begin position="220"/>
        <end position="229"/>
    </location>
</feature>
<feature type="sequence conflict" description="In Ref. 2; AAI07379/AAI07380." evidence="5" ref="2">
    <original>K</original>
    <variation>M</variation>
    <location>
        <position position="85"/>
    </location>
</feature>
<feature type="sequence conflict" description="In Ref. 2; AAI07380." evidence="5" ref="2">
    <original>E</original>
    <variation>V</variation>
    <location>
        <position position="227"/>
    </location>
</feature>
<feature type="sequence conflict" description="In Ref. 1; BAC30731." evidence="5" ref="1">
    <original>Y</original>
    <variation>H</variation>
    <location>
        <position position="248"/>
    </location>
</feature>
<feature type="sequence conflict" description="In Ref. 1; BAC30731." evidence="5" ref="1">
    <original>Y</original>
    <variation>C</variation>
    <location>
        <position position="291"/>
    </location>
</feature>
<feature type="sequence conflict" description="In Ref. 2; AAI07380." evidence="5" ref="2">
    <original>E</original>
    <variation>D</variation>
    <location>
        <position position="313"/>
    </location>
</feature>
<feature type="sequence conflict" description="In Ref. 2; AAI07380." evidence="5" ref="2">
    <original>K</original>
    <variation>R</variation>
    <location>
        <position position="338"/>
    </location>
</feature>
<feature type="sequence conflict" description="In Ref. 2; AAI07380." evidence="5" ref="2">
    <original>A</original>
    <variation>T</variation>
    <location>
        <position position="418"/>
    </location>
</feature>
<evidence type="ECO:0000250" key="1"/>
<evidence type="ECO:0000255" key="2">
    <source>
        <dbReference type="PROSITE-ProRule" id="PRU00061"/>
    </source>
</evidence>
<evidence type="ECO:0000255" key="3">
    <source>
        <dbReference type="PROSITE-ProRule" id="PRU00106"/>
    </source>
</evidence>
<evidence type="ECO:0000256" key="4">
    <source>
        <dbReference type="SAM" id="MobiDB-lite"/>
    </source>
</evidence>
<evidence type="ECO:0000305" key="5"/>
<evidence type="ECO:0000312" key="6">
    <source>
        <dbReference type="MGI" id="MGI:2138243"/>
    </source>
</evidence>
<comment type="subcellular location">
    <subcellularLocation>
        <location evidence="1">Nucleus</location>
    </subcellularLocation>
</comment>
<comment type="similarity">
    <text evidence="5">Belongs to the HIN-200 family.</text>
</comment>
<reference key="1">
    <citation type="journal article" date="2005" name="Science">
        <title>The transcriptional landscape of the mammalian genome.</title>
        <authorList>
            <person name="Carninci P."/>
            <person name="Kasukawa T."/>
            <person name="Katayama S."/>
            <person name="Gough J."/>
            <person name="Frith M.C."/>
            <person name="Maeda N."/>
            <person name="Oyama R."/>
            <person name="Ravasi T."/>
            <person name="Lenhard B."/>
            <person name="Wells C."/>
            <person name="Kodzius R."/>
            <person name="Shimokawa K."/>
            <person name="Bajic V.B."/>
            <person name="Brenner S.E."/>
            <person name="Batalov S."/>
            <person name="Forrest A.R."/>
            <person name="Zavolan M."/>
            <person name="Davis M.J."/>
            <person name="Wilming L.G."/>
            <person name="Aidinis V."/>
            <person name="Allen J.E."/>
            <person name="Ambesi-Impiombato A."/>
            <person name="Apweiler R."/>
            <person name="Aturaliya R.N."/>
            <person name="Bailey T.L."/>
            <person name="Bansal M."/>
            <person name="Baxter L."/>
            <person name="Beisel K.W."/>
            <person name="Bersano T."/>
            <person name="Bono H."/>
            <person name="Chalk A.M."/>
            <person name="Chiu K.P."/>
            <person name="Choudhary V."/>
            <person name="Christoffels A."/>
            <person name="Clutterbuck D.R."/>
            <person name="Crowe M.L."/>
            <person name="Dalla E."/>
            <person name="Dalrymple B.P."/>
            <person name="de Bono B."/>
            <person name="Della Gatta G."/>
            <person name="di Bernardo D."/>
            <person name="Down T."/>
            <person name="Engstrom P."/>
            <person name="Fagiolini M."/>
            <person name="Faulkner G."/>
            <person name="Fletcher C.F."/>
            <person name="Fukushima T."/>
            <person name="Furuno M."/>
            <person name="Futaki S."/>
            <person name="Gariboldi M."/>
            <person name="Georgii-Hemming P."/>
            <person name="Gingeras T.R."/>
            <person name="Gojobori T."/>
            <person name="Green R.E."/>
            <person name="Gustincich S."/>
            <person name="Harbers M."/>
            <person name="Hayashi Y."/>
            <person name="Hensch T.K."/>
            <person name="Hirokawa N."/>
            <person name="Hill D."/>
            <person name="Huminiecki L."/>
            <person name="Iacono M."/>
            <person name="Ikeo K."/>
            <person name="Iwama A."/>
            <person name="Ishikawa T."/>
            <person name="Jakt M."/>
            <person name="Kanapin A."/>
            <person name="Katoh M."/>
            <person name="Kawasawa Y."/>
            <person name="Kelso J."/>
            <person name="Kitamura H."/>
            <person name="Kitano H."/>
            <person name="Kollias G."/>
            <person name="Krishnan S.P."/>
            <person name="Kruger A."/>
            <person name="Kummerfeld S.K."/>
            <person name="Kurochkin I.V."/>
            <person name="Lareau L.F."/>
            <person name="Lazarevic D."/>
            <person name="Lipovich L."/>
            <person name="Liu J."/>
            <person name="Liuni S."/>
            <person name="McWilliam S."/>
            <person name="Madan Babu M."/>
            <person name="Madera M."/>
            <person name="Marchionni L."/>
            <person name="Matsuda H."/>
            <person name="Matsuzawa S."/>
            <person name="Miki H."/>
            <person name="Mignone F."/>
            <person name="Miyake S."/>
            <person name="Morris K."/>
            <person name="Mottagui-Tabar S."/>
            <person name="Mulder N."/>
            <person name="Nakano N."/>
            <person name="Nakauchi H."/>
            <person name="Ng P."/>
            <person name="Nilsson R."/>
            <person name="Nishiguchi S."/>
            <person name="Nishikawa S."/>
            <person name="Nori F."/>
            <person name="Ohara O."/>
            <person name="Okazaki Y."/>
            <person name="Orlando V."/>
            <person name="Pang K.C."/>
            <person name="Pavan W.J."/>
            <person name="Pavesi G."/>
            <person name="Pesole G."/>
            <person name="Petrovsky N."/>
            <person name="Piazza S."/>
            <person name="Reed J."/>
            <person name="Reid J.F."/>
            <person name="Ring B.Z."/>
            <person name="Ringwald M."/>
            <person name="Rost B."/>
            <person name="Ruan Y."/>
            <person name="Salzberg S.L."/>
            <person name="Sandelin A."/>
            <person name="Schneider C."/>
            <person name="Schoenbach C."/>
            <person name="Sekiguchi K."/>
            <person name="Semple C.A."/>
            <person name="Seno S."/>
            <person name="Sessa L."/>
            <person name="Sheng Y."/>
            <person name="Shibata Y."/>
            <person name="Shimada H."/>
            <person name="Shimada K."/>
            <person name="Silva D."/>
            <person name="Sinclair B."/>
            <person name="Sperling S."/>
            <person name="Stupka E."/>
            <person name="Sugiura K."/>
            <person name="Sultana R."/>
            <person name="Takenaka Y."/>
            <person name="Taki K."/>
            <person name="Tammoja K."/>
            <person name="Tan S.L."/>
            <person name="Tang S."/>
            <person name="Taylor M.S."/>
            <person name="Tegner J."/>
            <person name="Teichmann S.A."/>
            <person name="Ueda H.R."/>
            <person name="van Nimwegen E."/>
            <person name="Verardo R."/>
            <person name="Wei C.L."/>
            <person name="Yagi K."/>
            <person name="Yamanishi H."/>
            <person name="Zabarovsky E."/>
            <person name="Zhu S."/>
            <person name="Zimmer A."/>
            <person name="Hide W."/>
            <person name="Bult C."/>
            <person name="Grimmond S.M."/>
            <person name="Teasdale R.D."/>
            <person name="Liu E.T."/>
            <person name="Brusic V."/>
            <person name="Quackenbush J."/>
            <person name="Wahlestedt C."/>
            <person name="Mattick J.S."/>
            <person name="Hume D.A."/>
            <person name="Kai C."/>
            <person name="Sasaki D."/>
            <person name="Tomaru Y."/>
            <person name="Fukuda S."/>
            <person name="Kanamori-Katayama M."/>
            <person name="Suzuki M."/>
            <person name="Aoki J."/>
            <person name="Arakawa T."/>
            <person name="Iida J."/>
            <person name="Imamura K."/>
            <person name="Itoh M."/>
            <person name="Kato T."/>
            <person name="Kawaji H."/>
            <person name="Kawagashira N."/>
            <person name="Kawashima T."/>
            <person name="Kojima M."/>
            <person name="Kondo S."/>
            <person name="Konno H."/>
            <person name="Nakano K."/>
            <person name="Ninomiya N."/>
            <person name="Nishio T."/>
            <person name="Okada M."/>
            <person name="Plessy C."/>
            <person name="Shibata K."/>
            <person name="Shiraki T."/>
            <person name="Suzuki S."/>
            <person name="Tagami M."/>
            <person name="Waki K."/>
            <person name="Watahiki A."/>
            <person name="Okamura-Oho Y."/>
            <person name="Suzuki H."/>
            <person name="Kawai J."/>
            <person name="Hayashizaki Y."/>
        </authorList>
    </citation>
    <scope>NUCLEOTIDE SEQUENCE [LARGE SCALE MRNA]</scope>
    <source>
        <strain>C57BL/6J</strain>
        <tissue>Aorta</tissue>
        <tissue>Bone marrow</tissue>
        <tissue>Testis</tissue>
        <tissue>Thymus</tissue>
    </source>
</reference>
<reference key="2">
    <citation type="journal article" date="2004" name="Genome Res.">
        <title>The status, quality, and expansion of the NIH full-length cDNA project: the Mammalian Gene Collection (MGC).</title>
        <authorList>
            <consortium name="The MGC Project Team"/>
        </authorList>
    </citation>
    <scope>NUCLEOTIDE SEQUENCE [LARGE SCALE MRNA]</scope>
    <source>
        <strain>C57BL/6NCr</strain>
        <tissue>Hematopoietic stem cell</tissue>
    </source>
</reference>
<reference key="3">
    <citation type="journal article" date="2005" name="Exp. Cell Res.">
        <title>The HIN-200 family: more than interferon-inducible genes?</title>
        <authorList>
            <person name="Ludlow L.E.A."/>
            <person name="Johnstone R.W."/>
            <person name="Clarke C.J.P."/>
        </authorList>
    </citation>
    <scope>IDENTIFICATION</scope>
</reference>
<reference key="4">
    <citation type="journal article" date="2010" name="Cell">
        <title>A tissue-specific atlas of mouse protein phosphorylation and expression.</title>
        <authorList>
            <person name="Huttlin E.L."/>
            <person name="Jedrychowski M.P."/>
            <person name="Elias J.E."/>
            <person name="Goswami T."/>
            <person name="Rad R."/>
            <person name="Beausoleil S.A."/>
            <person name="Villen J."/>
            <person name="Haas W."/>
            <person name="Sowa M.E."/>
            <person name="Gygi S.P."/>
        </authorList>
    </citation>
    <scope>IDENTIFICATION BY MASS SPECTROMETRY [LARGE SCALE ANALYSIS]</scope>
    <source>
        <tissue>Spleen</tissue>
    </source>
</reference>
<protein>
    <recommendedName>
        <fullName>Pyrin and HIN domain-containing protein 1</fullName>
    </recommendedName>
    <alternativeName>
        <fullName>Interferon-inducible protein 209</fullName>
        <shortName>Ifi-209</shortName>
    </alternativeName>
    <alternativeName>
        <fullName>Interferon-inducible protein X</fullName>
    </alternativeName>
    <alternativeName>
        <fullName>Interferon-inducible protein p209</fullName>
    </alternativeName>
</protein>
<sequence length="420" mass="46887">MVNEYKRIVLLTGLMGINDHDFRMVKSLLSKELKLNRMQDQYDRVKIADLMEDKFPKDAGVDQLIKLYKQIPGLGDIANKLKNEKAKAKRTRTGKRKTAAKRQRQEEPSTSQPMSTTNEDAEPESGRSTPDTQVAQLSLPTASRRNQAIQISPTIASSSGQTSSRSSETLQSIIQSPKTPKRPSSSILDPPVSSGTASSSAQALGVPLATIAKRQRLKNVPKEPSEENGHQQGSKKVMVLKVTEPFSYDVTEEKMFHATVATETEFFRVKVFDIVLKEKFIPNKVLTISNYVGCNGFINIYSASSVSEVNDGEPMNIPLSLRKSANRTPKINYLCSKKRGIFVNGVFTVCKKEEKWNYICYEIGDDTGMMEVEVYGRLTNIACNPGDKLRLICFKLIPDEEKAQLRSTTHSNMQVIKAKN</sequence>
<proteinExistence type="evidence at protein level"/>